<reference key="1">
    <citation type="submission" date="2007-05" db="EMBL/GenBank/DDBJ databases">
        <title>Complete sequence of Geobacter uraniireducens Rf4.</title>
        <authorList>
            <consortium name="US DOE Joint Genome Institute"/>
            <person name="Copeland A."/>
            <person name="Lucas S."/>
            <person name="Lapidus A."/>
            <person name="Barry K."/>
            <person name="Detter J.C."/>
            <person name="Glavina del Rio T."/>
            <person name="Hammon N."/>
            <person name="Israni S."/>
            <person name="Dalin E."/>
            <person name="Tice H."/>
            <person name="Pitluck S."/>
            <person name="Chertkov O."/>
            <person name="Brettin T."/>
            <person name="Bruce D."/>
            <person name="Han C."/>
            <person name="Schmutz J."/>
            <person name="Larimer F."/>
            <person name="Land M."/>
            <person name="Hauser L."/>
            <person name="Kyrpides N."/>
            <person name="Mikhailova N."/>
            <person name="Shelobolina E."/>
            <person name="Aklujkar M."/>
            <person name="Lovley D."/>
            <person name="Richardson P."/>
        </authorList>
    </citation>
    <scope>NUCLEOTIDE SEQUENCE [LARGE SCALE GENOMIC DNA]</scope>
    <source>
        <strain>ATCC BAA-1134 / JCM 13001 / Rf4</strain>
    </source>
</reference>
<gene>
    <name evidence="1" type="primary">rplT</name>
    <name type="ordered locus">Gura_2625</name>
</gene>
<comment type="function">
    <text evidence="1">Binds directly to 23S ribosomal RNA and is necessary for the in vitro assembly process of the 50S ribosomal subunit. It is not involved in the protein synthesizing functions of that subunit.</text>
</comment>
<comment type="similarity">
    <text evidence="1">Belongs to the bacterial ribosomal protein bL20 family.</text>
</comment>
<name>RL20_GEOUR</name>
<accession>A5G4T4</accession>
<dbReference type="EMBL" id="CP000698">
    <property type="protein sequence ID" value="ABQ26802.1"/>
    <property type="molecule type" value="Genomic_DNA"/>
</dbReference>
<dbReference type="RefSeq" id="WP_011939479.1">
    <property type="nucleotide sequence ID" value="NC_009483.1"/>
</dbReference>
<dbReference type="SMR" id="A5G4T4"/>
<dbReference type="STRING" id="351605.Gura_2625"/>
<dbReference type="KEGG" id="gur:Gura_2625"/>
<dbReference type="HOGENOM" id="CLU_123265_0_1_7"/>
<dbReference type="OrthoDB" id="9808966at2"/>
<dbReference type="Proteomes" id="UP000006695">
    <property type="component" value="Chromosome"/>
</dbReference>
<dbReference type="GO" id="GO:1990904">
    <property type="term" value="C:ribonucleoprotein complex"/>
    <property type="evidence" value="ECO:0007669"/>
    <property type="project" value="UniProtKB-KW"/>
</dbReference>
<dbReference type="GO" id="GO:0005840">
    <property type="term" value="C:ribosome"/>
    <property type="evidence" value="ECO:0007669"/>
    <property type="project" value="UniProtKB-KW"/>
</dbReference>
<dbReference type="GO" id="GO:0019843">
    <property type="term" value="F:rRNA binding"/>
    <property type="evidence" value="ECO:0007669"/>
    <property type="project" value="UniProtKB-UniRule"/>
</dbReference>
<dbReference type="GO" id="GO:0003735">
    <property type="term" value="F:structural constituent of ribosome"/>
    <property type="evidence" value="ECO:0007669"/>
    <property type="project" value="InterPro"/>
</dbReference>
<dbReference type="GO" id="GO:0000027">
    <property type="term" value="P:ribosomal large subunit assembly"/>
    <property type="evidence" value="ECO:0007669"/>
    <property type="project" value="UniProtKB-UniRule"/>
</dbReference>
<dbReference type="GO" id="GO:0006412">
    <property type="term" value="P:translation"/>
    <property type="evidence" value="ECO:0007669"/>
    <property type="project" value="InterPro"/>
</dbReference>
<dbReference type="CDD" id="cd07026">
    <property type="entry name" value="Ribosomal_L20"/>
    <property type="match status" value="1"/>
</dbReference>
<dbReference type="FunFam" id="1.10.1900.20:FF:000001">
    <property type="entry name" value="50S ribosomal protein L20"/>
    <property type="match status" value="1"/>
</dbReference>
<dbReference type="Gene3D" id="6.10.160.10">
    <property type="match status" value="1"/>
</dbReference>
<dbReference type="Gene3D" id="1.10.1900.20">
    <property type="entry name" value="Ribosomal protein L20"/>
    <property type="match status" value="1"/>
</dbReference>
<dbReference type="HAMAP" id="MF_00382">
    <property type="entry name" value="Ribosomal_bL20"/>
    <property type="match status" value="1"/>
</dbReference>
<dbReference type="InterPro" id="IPR005813">
    <property type="entry name" value="Ribosomal_bL20"/>
</dbReference>
<dbReference type="InterPro" id="IPR049946">
    <property type="entry name" value="RIBOSOMAL_L20_CS"/>
</dbReference>
<dbReference type="InterPro" id="IPR035566">
    <property type="entry name" value="Ribosomal_protein_bL20_C"/>
</dbReference>
<dbReference type="NCBIfam" id="TIGR01032">
    <property type="entry name" value="rplT_bact"/>
    <property type="match status" value="1"/>
</dbReference>
<dbReference type="PANTHER" id="PTHR10986">
    <property type="entry name" value="39S RIBOSOMAL PROTEIN L20"/>
    <property type="match status" value="1"/>
</dbReference>
<dbReference type="Pfam" id="PF00453">
    <property type="entry name" value="Ribosomal_L20"/>
    <property type="match status" value="1"/>
</dbReference>
<dbReference type="PRINTS" id="PR00062">
    <property type="entry name" value="RIBOSOMALL20"/>
</dbReference>
<dbReference type="SUPFAM" id="SSF74731">
    <property type="entry name" value="Ribosomal protein L20"/>
    <property type="match status" value="1"/>
</dbReference>
<dbReference type="PROSITE" id="PS00937">
    <property type="entry name" value="RIBOSOMAL_L20"/>
    <property type="match status" value="1"/>
</dbReference>
<proteinExistence type="inferred from homology"/>
<feature type="chain" id="PRO_1000080074" description="Large ribosomal subunit protein bL20">
    <location>
        <begin position="1"/>
        <end position="117"/>
    </location>
</feature>
<organism>
    <name type="scientific">Geotalea uraniireducens (strain Rf4)</name>
    <name type="common">Geobacter uraniireducens</name>
    <dbReference type="NCBI Taxonomy" id="351605"/>
    <lineage>
        <taxon>Bacteria</taxon>
        <taxon>Pseudomonadati</taxon>
        <taxon>Thermodesulfobacteriota</taxon>
        <taxon>Desulfuromonadia</taxon>
        <taxon>Geobacterales</taxon>
        <taxon>Geobacteraceae</taxon>
        <taxon>Geotalea</taxon>
    </lineage>
</organism>
<protein>
    <recommendedName>
        <fullName evidence="1">Large ribosomal subunit protein bL20</fullName>
    </recommendedName>
    <alternativeName>
        <fullName evidence="2">50S ribosomal protein L20</fullName>
    </alternativeName>
</protein>
<sequence>MPRVKRGFKARQRRNKVLKLAKGYRGARSKLFRSATEAVDRALNYAFRDRRVKKRDFRALWIARINAAARINGLSYSKLIHGLKIAKVEVDRKVMADLAVSDPRGFAEIASLAKANI</sequence>
<keyword id="KW-1185">Reference proteome</keyword>
<keyword id="KW-0687">Ribonucleoprotein</keyword>
<keyword id="KW-0689">Ribosomal protein</keyword>
<keyword id="KW-0694">RNA-binding</keyword>
<keyword id="KW-0699">rRNA-binding</keyword>
<evidence type="ECO:0000255" key="1">
    <source>
        <dbReference type="HAMAP-Rule" id="MF_00382"/>
    </source>
</evidence>
<evidence type="ECO:0000305" key="2"/>